<evidence type="ECO:0000255" key="1">
    <source>
        <dbReference type="HAMAP-Rule" id="MF_00071"/>
    </source>
</evidence>
<feature type="chain" id="PRO_1000032038" description="Elongation factor 4">
    <location>
        <begin position="1"/>
        <end position="599"/>
    </location>
</feature>
<feature type="domain" description="tr-type G">
    <location>
        <begin position="5"/>
        <end position="187"/>
    </location>
</feature>
<feature type="binding site" evidence="1">
    <location>
        <begin position="17"/>
        <end position="22"/>
    </location>
    <ligand>
        <name>GTP</name>
        <dbReference type="ChEBI" id="CHEBI:37565"/>
    </ligand>
</feature>
<feature type="binding site" evidence="1">
    <location>
        <begin position="134"/>
        <end position="137"/>
    </location>
    <ligand>
        <name>GTP</name>
        <dbReference type="ChEBI" id="CHEBI:37565"/>
    </ligand>
</feature>
<keyword id="KW-0997">Cell inner membrane</keyword>
<keyword id="KW-1003">Cell membrane</keyword>
<keyword id="KW-0342">GTP-binding</keyword>
<keyword id="KW-0378">Hydrolase</keyword>
<keyword id="KW-0472">Membrane</keyword>
<keyword id="KW-0547">Nucleotide-binding</keyword>
<keyword id="KW-0648">Protein biosynthesis</keyword>
<name>LEPA_PSEAB</name>
<organism>
    <name type="scientific">Pseudomonas aeruginosa (strain UCBPP-PA14)</name>
    <dbReference type="NCBI Taxonomy" id="208963"/>
    <lineage>
        <taxon>Bacteria</taxon>
        <taxon>Pseudomonadati</taxon>
        <taxon>Pseudomonadota</taxon>
        <taxon>Gammaproteobacteria</taxon>
        <taxon>Pseudomonadales</taxon>
        <taxon>Pseudomonadaceae</taxon>
        <taxon>Pseudomonas</taxon>
    </lineage>
</organism>
<proteinExistence type="inferred from homology"/>
<protein>
    <recommendedName>
        <fullName evidence="1">Elongation factor 4</fullName>
        <shortName evidence="1">EF-4</shortName>
        <ecNumber evidence="1">3.6.5.n1</ecNumber>
    </recommendedName>
    <alternativeName>
        <fullName evidence="1">Ribosomal back-translocase LepA</fullName>
    </alternativeName>
</protein>
<reference key="1">
    <citation type="journal article" date="2006" name="Genome Biol.">
        <title>Genomic analysis reveals that Pseudomonas aeruginosa virulence is combinatorial.</title>
        <authorList>
            <person name="Lee D.G."/>
            <person name="Urbach J.M."/>
            <person name="Wu G."/>
            <person name="Liberati N.T."/>
            <person name="Feinbaum R.L."/>
            <person name="Miyata S."/>
            <person name="Diggins L.T."/>
            <person name="He J."/>
            <person name="Saucier M."/>
            <person name="Deziel E."/>
            <person name="Friedman L."/>
            <person name="Li L."/>
            <person name="Grills G."/>
            <person name="Montgomery K."/>
            <person name="Kucherlapati R."/>
            <person name="Rahme L.G."/>
            <person name="Ausubel F.M."/>
        </authorList>
    </citation>
    <scope>NUCLEOTIDE SEQUENCE [LARGE SCALE GENOMIC DNA]</scope>
    <source>
        <strain>UCBPP-PA14</strain>
    </source>
</reference>
<dbReference type="EC" id="3.6.5.n1" evidence="1"/>
<dbReference type="EMBL" id="CP000438">
    <property type="protein sequence ID" value="ABJ09919.1"/>
    <property type="molecule type" value="Genomic_DNA"/>
</dbReference>
<dbReference type="RefSeq" id="WP_003085555.1">
    <property type="nucleotide sequence ID" value="NZ_CP034244.1"/>
</dbReference>
<dbReference type="SMR" id="Q02HR9"/>
<dbReference type="KEGG" id="pau:PA14_54370"/>
<dbReference type="PseudoCAP" id="PA14_54370"/>
<dbReference type="HOGENOM" id="CLU_009995_3_3_6"/>
<dbReference type="BioCyc" id="PAER208963:G1G74-4577-MONOMER"/>
<dbReference type="Proteomes" id="UP000000653">
    <property type="component" value="Chromosome"/>
</dbReference>
<dbReference type="GO" id="GO:0005886">
    <property type="term" value="C:plasma membrane"/>
    <property type="evidence" value="ECO:0007669"/>
    <property type="project" value="UniProtKB-SubCell"/>
</dbReference>
<dbReference type="GO" id="GO:0005525">
    <property type="term" value="F:GTP binding"/>
    <property type="evidence" value="ECO:0007669"/>
    <property type="project" value="UniProtKB-UniRule"/>
</dbReference>
<dbReference type="GO" id="GO:0003924">
    <property type="term" value="F:GTPase activity"/>
    <property type="evidence" value="ECO:0007669"/>
    <property type="project" value="UniProtKB-UniRule"/>
</dbReference>
<dbReference type="GO" id="GO:0097216">
    <property type="term" value="F:guanosine tetraphosphate binding"/>
    <property type="evidence" value="ECO:0007669"/>
    <property type="project" value="UniProtKB-ARBA"/>
</dbReference>
<dbReference type="GO" id="GO:0043022">
    <property type="term" value="F:ribosome binding"/>
    <property type="evidence" value="ECO:0007669"/>
    <property type="project" value="UniProtKB-UniRule"/>
</dbReference>
<dbReference type="GO" id="GO:0003746">
    <property type="term" value="F:translation elongation factor activity"/>
    <property type="evidence" value="ECO:0007669"/>
    <property type="project" value="UniProtKB-UniRule"/>
</dbReference>
<dbReference type="GO" id="GO:0045727">
    <property type="term" value="P:positive regulation of translation"/>
    <property type="evidence" value="ECO:0007669"/>
    <property type="project" value="UniProtKB-UniRule"/>
</dbReference>
<dbReference type="CDD" id="cd03699">
    <property type="entry name" value="EF4_II"/>
    <property type="match status" value="1"/>
</dbReference>
<dbReference type="CDD" id="cd16260">
    <property type="entry name" value="EF4_III"/>
    <property type="match status" value="1"/>
</dbReference>
<dbReference type="CDD" id="cd01890">
    <property type="entry name" value="LepA"/>
    <property type="match status" value="1"/>
</dbReference>
<dbReference type="CDD" id="cd03709">
    <property type="entry name" value="lepA_C"/>
    <property type="match status" value="1"/>
</dbReference>
<dbReference type="FunFam" id="3.40.50.300:FF:000078">
    <property type="entry name" value="Elongation factor 4"/>
    <property type="match status" value="1"/>
</dbReference>
<dbReference type="FunFam" id="2.40.30.10:FF:000015">
    <property type="entry name" value="Translation factor GUF1, mitochondrial"/>
    <property type="match status" value="1"/>
</dbReference>
<dbReference type="FunFam" id="3.30.70.240:FF:000007">
    <property type="entry name" value="Translation factor GUF1, mitochondrial"/>
    <property type="match status" value="1"/>
</dbReference>
<dbReference type="FunFam" id="3.30.70.2570:FF:000001">
    <property type="entry name" value="Translation factor GUF1, mitochondrial"/>
    <property type="match status" value="1"/>
</dbReference>
<dbReference type="FunFam" id="3.30.70.870:FF:000004">
    <property type="entry name" value="Translation factor GUF1, mitochondrial"/>
    <property type="match status" value="1"/>
</dbReference>
<dbReference type="Gene3D" id="3.30.70.240">
    <property type="match status" value="1"/>
</dbReference>
<dbReference type="Gene3D" id="3.30.70.2570">
    <property type="entry name" value="Elongation factor 4, C-terminal domain"/>
    <property type="match status" value="1"/>
</dbReference>
<dbReference type="Gene3D" id="3.30.70.870">
    <property type="entry name" value="Elongation Factor G (Translational Gtpase), domain 3"/>
    <property type="match status" value="1"/>
</dbReference>
<dbReference type="Gene3D" id="3.40.50.300">
    <property type="entry name" value="P-loop containing nucleotide triphosphate hydrolases"/>
    <property type="match status" value="1"/>
</dbReference>
<dbReference type="Gene3D" id="2.40.30.10">
    <property type="entry name" value="Translation factors"/>
    <property type="match status" value="1"/>
</dbReference>
<dbReference type="HAMAP" id="MF_00071">
    <property type="entry name" value="LepA"/>
    <property type="match status" value="1"/>
</dbReference>
<dbReference type="InterPro" id="IPR006297">
    <property type="entry name" value="EF-4"/>
</dbReference>
<dbReference type="InterPro" id="IPR035647">
    <property type="entry name" value="EFG_III/V"/>
</dbReference>
<dbReference type="InterPro" id="IPR000640">
    <property type="entry name" value="EFG_V-like"/>
</dbReference>
<dbReference type="InterPro" id="IPR004161">
    <property type="entry name" value="EFTu-like_2"/>
</dbReference>
<dbReference type="InterPro" id="IPR038363">
    <property type="entry name" value="LepA_C_sf"/>
</dbReference>
<dbReference type="InterPro" id="IPR013842">
    <property type="entry name" value="LepA_CTD"/>
</dbReference>
<dbReference type="InterPro" id="IPR035654">
    <property type="entry name" value="LepA_IV"/>
</dbReference>
<dbReference type="InterPro" id="IPR027417">
    <property type="entry name" value="P-loop_NTPase"/>
</dbReference>
<dbReference type="InterPro" id="IPR005225">
    <property type="entry name" value="Small_GTP-bd"/>
</dbReference>
<dbReference type="InterPro" id="IPR000795">
    <property type="entry name" value="T_Tr_GTP-bd_dom"/>
</dbReference>
<dbReference type="NCBIfam" id="TIGR01393">
    <property type="entry name" value="lepA"/>
    <property type="match status" value="1"/>
</dbReference>
<dbReference type="NCBIfam" id="TIGR00231">
    <property type="entry name" value="small_GTP"/>
    <property type="match status" value="1"/>
</dbReference>
<dbReference type="PANTHER" id="PTHR43512:SF4">
    <property type="entry name" value="TRANSLATION FACTOR GUF1 HOMOLOG, CHLOROPLASTIC"/>
    <property type="match status" value="1"/>
</dbReference>
<dbReference type="PANTHER" id="PTHR43512">
    <property type="entry name" value="TRANSLATION FACTOR GUF1-RELATED"/>
    <property type="match status" value="1"/>
</dbReference>
<dbReference type="Pfam" id="PF00679">
    <property type="entry name" value="EFG_C"/>
    <property type="match status" value="1"/>
</dbReference>
<dbReference type="Pfam" id="PF00009">
    <property type="entry name" value="GTP_EFTU"/>
    <property type="match status" value="1"/>
</dbReference>
<dbReference type="Pfam" id="PF03144">
    <property type="entry name" value="GTP_EFTU_D2"/>
    <property type="match status" value="1"/>
</dbReference>
<dbReference type="Pfam" id="PF06421">
    <property type="entry name" value="LepA_C"/>
    <property type="match status" value="1"/>
</dbReference>
<dbReference type="PRINTS" id="PR00315">
    <property type="entry name" value="ELONGATNFCT"/>
</dbReference>
<dbReference type="SUPFAM" id="SSF54980">
    <property type="entry name" value="EF-G C-terminal domain-like"/>
    <property type="match status" value="2"/>
</dbReference>
<dbReference type="SUPFAM" id="SSF52540">
    <property type="entry name" value="P-loop containing nucleoside triphosphate hydrolases"/>
    <property type="match status" value="1"/>
</dbReference>
<dbReference type="PROSITE" id="PS51722">
    <property type="entry name" value="G_TR_2"/>
    <property type="match status" value="1"/>
</dbReference>
<gene>
    <name evidence="1" type="primary">lepA</name>
    <name type="ordered locus">PA14_54370</name>
</gene>
<sequence>MSDLSHIRNFSIIAHIDHGKSTLADRFIQMCGGLSDREMEAQVLDSMDLERERGITIKAHSVTLHYKAQDGKTYQLNFIDTPGHVDFTYEVSRSLAACEGALLVVDAGQGVEAQSVANCYTAIEQGLEVMPVLNKMDLPQAEPERVKEEIESIIGIDATDAVACSAKSGMGVLEVLERLVTAIPAPEGEIEAPLQALIIDSWFDNYLGVVSLVRVKNGRVKKGDKILVKSTGKVHQVDSVGVFTPKHTETVDLKAGEVGFIIAGIKDIHGAPVGDTLTLNNTPDVEVLPGFKRVKPQVYAGLFPVSSDDFEDFRDALQKLTLNDSSLQYEPESSEALGFGFRCGFLGMLHMEIIQERLEREYDLDLITTAPTVVFEIVQKNGEIIYVDNPSKLPDLASIQEMREPICRATILVPKDHLGNVITLCIEKRGVQRDMHFLSGQVQVVYDLPMNEVVLDFFDRLKSTSRGYASLDYSFDRFEPSNLVRLDVLINGEKVDALALIVHRDNAPYKGRQLVEKMKELIPRQMFDVAIQAAIGGQIIARSTVKALRKNVLAKCYGGDVSRKRKLLEKQKAGKKRMKQVGSVEIPQEAFLAVLKVDS</sequence>
<accession>Q02HR9</accession>
<comment type="function">
    <text evidence="1">Required for accurate and efficient protein synthesis under certain stress conditions. May act as a fidelity factor of the translation reaction, by catalyzing a one-codon backward translocation of tRNAs on improperly translocated ribosomes. Back-translocation proceeds from a post-translocation (POST) complex to a pre-translocation (PRE) complex, thus giving elongation factor G a second chance to translocate the tRNAs correctly. Binds to ribosomes in a GTP-dependent manner.</text>
</comment>
<comment type="catalytic activity">
    <reaction evidence="1">
        <text>GTP + H2O = GDP + phosphate + H(+)</text>
        <dbReference type="Rhea" id="RHEA:19669"/>
        <dbReference type="ChEBI" id="CHEBI:15377"/>
        <dbReference type="ChEBI" id="CHEBI:15378"/>
        <dbReference type="ChEBI" id="CHEBI:37565"/>
        <dbReference type="ChEBI" id="CHEBI:43474"/>
        <dbReference type="ChEBI" id="CHEBI:58189"/>
        <dbReference type="EC" id="3.6.5.n1"/>
    </reaction>
</comment>
<comment type="subcellular location">
    <subcellularLocation>
        <location evidence="1">Cell inner membrane</location>
        <topology evidence="1">Peripheral membrane protein</topology>
        <orientation evidence="1">Cytoplasmic side</orientation>
    </subcellularLocation>
</comment>
<comment type="similarity">
    <text evidence="1">Belongs to the TRAFAC class translation factor GTPase superfamily. Classic translation factor GTPase family. LepA subfamily.</text>
</comment>